<keyword id="KW-0249">Electron transport</keyword>
<keyword id="KW-0349">Heme</keyword>
<keyword id="KW-0408">Iron</keyword>
<keyword id="KW-0472">Membrane</keyword>
<keyword id="KW-0479">Metal-binding</keyword>
<keyword id="KW-0496">Mitochondrion</keyword>
<keyword id="KW-0999">Mitochondrion inner membrane</keyword>
<keyword id="KW-0679">Respiratory chain</keyword>
<keyword id="KW-0812">Transmembrane</keyword>
<keyword id="KW-1133">Transmembrane helix</keyword>
<keyword id="KW-0813">Transport</keyword>
<keyword id="KW-0830">Ubiquinone</keyword>
<sequence length="380" mass="42808">MTIIRKKHPLIKIINHSFIDLPAPSNISSWWNFGSLLGLCLAIQILTGLFLAMHYTSDTATAFSSVAHICRDVNYGWLIRYMHANGASMFFICLFLHVGRGIYYGSYNMIETWNMGIILLFAVMATAFMGYVLPWGQMSFWGATVITNLLSAIPYIGTTLVEWIWGGFSVDKATLTRFFAFHFILPFIITALVLVHLLFLHETGSNNPTGLNSDADKIPFHPYYTIKDLLGVLILLMAFMILTLFFPDILGDPDNYTPANPLNTPPHIKPEWYFLFAYAILRSIPNKLGGVLALILSILILALMPLLHTSKQRALTFRPITQTMYWILVADLLILTWIGGQPVEYPFIIIGQTASIAYFTIIMILMPIAGMIENNILDLD</sequence>
<geneLocation type="mitochondrion"/>
<dbReference type="EMBL" id="AY513837">
    <property type="protein sequence ID" value="AAS82829.1"/>
    <property type="molecule type" value="Genomic_DNA"/>
</dbReference>
<dbReference type="EMBL" id="AY513838">
    <property type="protein sequence ID" value="AAS82830.1"/>
    <property type="molecule type" value="Genomic_DNA"/>
</dbReference>
<dbReference type="EMBL" id="AY513839">
    <property type="protein sequence ID" value="AAS82831.1"/>
    <property type="molecule type" value="Genomic_DNA"/>
</dbReference>
<dbReference type="SMR" id="Q6JDP8"/>
<dbReference type="GO" id="GO:0005743">
    <property type="term" value="C:mitochondrial inner membrane"/>
    <property type="evidence" value="ECO:0007669"/>
    <property type="project" value="UniProtKB-SubCell"/>
</dbReference>
<dbReference type="GO" id="GO:0045275">
    <property type="term" value="C:respiratory chain complex III"/>
    <property type="evidence" value="ECO:0007669"/>
    <property type="project" value="InterPro"/>
</dbReference>
<dbReference type="GO" id="GO:0046872">
    <property type="term" value="F:metal ion binding"/>
    <property type="evidence" value="ECO:0007669"/>
    <property type="project" value="UniProtKB-KW"/>
</dbReference>
<dbReference type="GO" id="GO:0008121">
    <property type="term" value="F:ubiquinol-cytochrome-c reductase activity"/>
    <property type="evidence" value="ECO:0007669"/>
    <property type="project" value="InterPro"/>
</dbReference>
<dbReference type="GO" id="GO:0006122">
    <property type="term" value="P:mitochondrial electron transport, ubiquinol to cytochrome c"/>
    <property type="evidence" value="ECO:0007669"/>
    <property type="project" value="TreeGrafter"/>
</dbReference>
<dbReference type="CDD" id="cd00290">
    <property type="entry name" value="cytochrome_b_C"/>
    <property type="match status" value="1"/>
</dbReference>
<dbReference type="CDD" id="cd00284">
    <property type="entry name" value="Cytochrome_b_N"/>
    <property type="match status" value="1"/>
</dbReference>
<dbReference type="FunFam" id="1.20.810.10:FF:000002">
    <property type="entry name" value="Cytochrome b"/>
    <property type="match status" value="1"/>
</dbReference>
<dbReference type="Gene3D" id="1.20.810.10">
    <property type="entry name" value="Cytochrome Bc1 Complex, Chain C"/>
    <property type="match status" value="1"/>
</dbReference>
<dbReference type="InterPro" id="IPR005798">
    <property type="entry name" value="Cyt_b/b6_C"/>
</dbReference>
<dbReference type="InterPro" id="IPR036150">
    <property type="entry name" value="Cyt_b/b6_C_sf"/>
</dbReference>
<dbReference type="InterPro" id="IPR005797">
    <property type="entry name" value="Cyt_b/b6_N"/>
</dbReference>
<dbReference type="InterPro" id="IPR027387">
    <property type="entry name" value="Cytb/b6-like_sf"/>
</dbReference>
<dbReference type="InterPro" id="IPR030689">
    <property type="entry name" value="Cytochrome_b"/>
</dbReference>
<dbReference type="InterPro" id="IPR048260">
    <property type="entry name" value="Cytochrome_b_C_euk/bac"/>
</dbReference>
<dbReference type="InterPro" id="IPR048259">
    <property type="entry name" value="Cytochrome_b_N_euk/bac"/>
</dbReference>
<dbReference type="InterPro" id="IPR016174">
    <property type="entry name" value="Di-haem_cyt_TM"/>
</dbReference>
<dbReference type="PANTHER" id="PTHR19271">
    <property type="entry name" value="CYTOCHROME B"/>
    <property type="match status" value="1"/>
</dbReference>
<dbReference type="PANTHER" id="PTHR19271:SF16">
    <property type="entry name" value="CYTOCHROME B"/>
    <property type="match status" value="1"/>
</dbReference>
<dbReference type="Pfam" id="PF00032">
    <property type="entry name" value="Cytochrom_B_C"/>
    <property type="match status" value="1"/>
</dbReference>
<dbReference type="Pfam" id="PF00033">
    <property type="entry name" value="Cytochrome_B"/>
    <property type="match status" value="1"/>
</dbReference>
<dbReference type="PIRSF" id="PIRSF038885">
    <property type="entry name" value="COB"/>
    <property type="match status" value="1"/>
</dbReference>
<dbReference type="SUPFAM" id="SSF81648">
    <property type="entry name" value="a domain/subunit of cytochrome bc1 complex (Ubiquinol-cytochrome c reductase)"/>
    <property type="match status" value="1"/>
</dbReference>
<dbReference type="SUPFAM" id="SSF81342">
    <property type="entry name" value="Transmembrane di-heme cytochromes"/>
    <property type="match status" value="1"/>
</dbReference>
<dbReference type="PROSITE" id="PS51003">
    <property type="entry name" value="CYTB_CTER"/>
    <property type="match status" value="1"/>
</dbReference>
<dbReference type="PROSITE" id="PS51002">
    <property type="entry name" value="CYTB_NTER"/>
    <property type="match status" value="1"/>
</dbReference>
<evidence type="ECO:0000250" key="1"/>
<evidence type="ECO:0000250" key="2">
    <source>
        <dbReference type="UniProtKB" id="P00157"/>
    </source>
</evidence>
<evidence type="ECO:0000255" key="3">
    <source>
        <dbReference type="PROSITE-ProRule" id="PRU00967"/>
    </source>
</evidence>
<evidence type="ECO:0000255" key="4">
    <source>
        <dbReference type="PROSITE-ProRule" id="PRU00968"/>
    </source>
</evidence>
<comment type="function">
    <text evidence="2">Component of the ubiquinol-cytochrome c reductase complex (complex III or cytochrome b-c1 complex) that is part of the mitochondrial respiratory chain. The b-c1 complex mediates electron transfer from ubiquinol to cytochrome c. Contributes to the generation of a proton gradient across the mitochondrial membrane that is then used for ATP synthesis.</text>
</comment>
<comment type="cofactor">
    <cofactor evidence="2">
        <name>heme b</name>
        <dbReference type="ChEBI" id="CHEBI:60344"/>
    </cofactor>
    <text evidence="2">Binds 2 heme b groups non-covalently.</text>
</comment>
<comment type="subunit">
    <text evidence="2">The cytochrome bc1 complex contains 11 subunits: 3 respiratory subunits (MT-CYB, CYC1 and UQCRFS1), 2 core proteins (UQCRC1 and UQCRC2) and 6 low-molecular weight proteins (UQCRH/QCR6, UQCRB/QCR7, UQCRQ/QCR8, UQCR10/QCR9, UQCR11/QCR10 and a cleavage product of UQCRFS1). This cytochrome bc1 complex then forms a dimer.</text>
</comment>
<comment type="subcellular location">
    <subcellularLocation>
        <location evidence="2">Mitochondrion inner membrane</location>
        <topology evidence="2">Multi-pass membrane protein</topology>
    </subcellularLocation>
</comment>
<comment type="miscellaneous">
    <text evidence="1">Heme 1 (or BL or b562) is low-potential and absorbs at about 562 nm, and heme 2 (or BH or b566) is high-potential and absorbs at about 566 nm.</text>
</comment>
<comment type="similarity">
    <text evidence="3 4">Belongs to the cytochrome b family.</text>
</comment>
<comment type="caution">
    <text evidence="2">The full-length protein contains only eight transmembrane helices, not nine as predicted by bioinformatics tools.</text>
</comment>
<organism>
    <name type="scientific">Microtus tatricus</name>
    <name type="common">Tatra pine vole</name>
    <dbReference type="NCBI Taxonomy" id="137713"/>
    <lineage>
        <taxon>Eukaryota</taxon>
        <taxon>Metazoa</taxon>
        <taxon>Chordata</taxon>
        <taxon>Craniata</taxon>
        <taxon>Vertebrata</taxon>
        <taxon>Euteleostomi</taxon>
        <taxon>Mammalia</taxon>
        <taxon>Eutheria</taxon>
        <taxon>Euarchontoglires</taxon>
        <taxon>Glires</taxon>
        <taxon>Rodentia</taxon>
        <taxon>Myomorpha</taxon>
        <taxon>Muroidea</taxon>
        <taxon>Cricetidae</taxon>
        <taxon>Arvicolinae</taxon>
        <taxon>Microtus</taxon>
    </lineage>
</organism>
<feature type="chain" id="PRO_0000255093" description="Cytochrome b">
    <location>
        <begin position="1"/>
        <end position="380"/>
    </location>
</feature>
<feature type="transmembrane region" description="Helical" evidence="2">
    <location>
        <begin position="33"/>
        <end position="53"/>
    </location>
</feature>
<feature type="transmembrane region" description="Helical" evidence="2">
    <location>
        <begin position="77"/>
        <end position="98"/>
    </location>
</feature>
<feature type="transmembrane region" description="Helical" evidence="2">
    <location>
        <begin position="113"/>
        <end position="133"/>
    </location>
</feature>
<feature type="transmembrane region" description="Helical" evidence="2">
    <location>
        <begin position="178"/>
        <end position="198"/>
    </location>
</feature>
<feature type="transmembrane region" description="Helical" evidence="2">
    <location>
        <begin position="226"/>
        <end position="246"/>
    </location>
</feature>
<feature type="transmembrane region" description="Helical" evidence="2">
    <location>
        <begin position="288"/>
        <end position="308"/>
    </location>
</feature>
<feature type="transmembrane region" description="Helical" evidence="2">
    <location>
        <begin position="320"/>
        <end position="340"/>
    </location>
</feature>
<feature type="transmembrane region" description="Helical" evidence="2">
    <location>
        <begin position="347"/>
        <end position="367"/>
    </location>
</feature>
<feature type="binding site" description="axial binding residue" evidence="2">
    <location>
        <position position="83"/>
    </location>
    <ligand>
        <name>heme b</name>
        <dbReference type="ChEBI" id="CHEBI:60344"/>
        <label>b562</label>
    </ligand>
    <ligandPart>
        <name>Fe</name>
        <dbReference type="ChEBI" id="CHEBI:18248"/>
    </ligandPart>
</feature>
<feature type="binding site" description="axial binding residue" evidence="2">
    <location>
        <position position="97"/>
    </location>
    <ligand>
        <name>heme b</name>
        <dbReference type="ChEBI" id="CHEBI:60344"/>
        <label>b566</label>
    </ligand>
    <ligandPart>
        <name>Fe</name>
        <dbReference type="ChEBI" id="CHEBI:18248"/>
    </ligandPart>
</feature>
<feature type="binding site" description="axial binding residue" evidence="2">
    <location>
        <position position="182"/>
    </location>
    <ligand>
        <name>heme b</name>
        <dbReference type="ChEBI" id="CHEBI:60344"/>
        <label>b562</label>
    </ligand>
    <ligandPart>
        <name>Fe</name>
        <dbReference type="ChEBI" id="CHEBI:18248"/>
    </ligandPart>
</feature>
<feature type="binding site" description="axial binding residue" evidence="2">
    <location>
        <position position="196"/>
    </location>
    <ligand>
        <name>heme b</name>
        <dbReference type="ChEBI" id="CHEBI:60344"/>
        <label>b566</label>
    </ligand>
    <ligandPart>
        <name>Fe</name>
        <dbReference type="ChEBI" id="CHEBI:18248"/>
    </ligandPart>
</feature>
<feature type="binding site" evidence="2">
    <location>
        <position position="201"/>
    </location>
    <ligand>
        <name>a ubiquinone</name>
        <dbReference type="ChEBI" id="CHEBI:16389"/>
    </ligand>
</feature>
<feature type="sequence variant" description="In strain: Isolate 3.">
    <original>A</original>
    <variation>T</variation>
    <location>
        <position position="122"/>
    </location>
</feature>
<feature type="sequence variant" description="In strain: Isolate 3.">
    <original>A</original>
    <variation>S</variation>
    <location>
        <position position="314"/>
    </location>
</feature>
<name>CYB_MICTT</name>
<protein>
    <recommendedName>
        <fullName>Cytochrome b</fullName>
    </recommendedName>
    <alternativeName>
        <fullName>Complex III subunit 3</fullName>
    </alternativeName>
    <alternativeName>
        <fullName>Complex III subunit III</fullName>
    </alternativeName>
    <alternativeName>
        <fullName>Cytochrome b-c1 complex subunit 3</fullName>
    </alternativeName>
    <alternativeName>
        <fullName>Ubiquinol-cytochrome-c reductase complex cytochrome b subunit</fullName>
    </alternativeName>
</protein>
<accession>Q6JDP8</accession>
<accession>Q6JDP7</accession>
<reference key="1">
    <citation type="journal article" date="2004" name="Mol. Phylogenet. Evol.">
        <title>Molecular phylogeny of the speciose vole genus Microtus (Arvicolinae, Rodentia) inferred from mitochondrial DNA sequences.</title>
        <authorList>
            <person name="Jaarola M."/>
            <person name="Martinkova N."/>
            <person name="Gunduz I."/>
            <person name="Brunhoff C."/>
            <person name="Zima J."/>
            <person name="Nadachowski A."/>
            <person name="Amori G."/>
            <person name="Bulatova N.S."/>
            <person name="Chondropoulos B."/>
            <person name="Fraguedakis-Tsolis S."/>
            <person name="Gonzalez-Esteban J."/>
            <person name="Lopez-Fuster M.J."/>
            <person name="Kandaurov A.S."/>
            <person name="Kefelioglu H."/>
            <person name="Mathias M.L."/>
            <person name="Villate I."/>
            <person name="Searle J.B."/>
        </authorList>
    </citation>
    <scope>NUCLEOTIDE SEQUENCE [GENOMIC DNA]</scope>
    <source>
        <strain>Isolate 1</strain>
        <strain>Isolate 2</strain>
        <strain>Isolate 3</strain>
    </source>
</reference>
<proteinExistence type="inferred from homology"/>
<gene>
    <name type="primary">MT-CYB</name>
    <name type="synonym">COB</name>
    <name type="synonym">CYTB</name>
    <name type="synonym">MTCYB</name>
</gene>